<feature type="chain" id="PRO_0000076416" description="Subtilisin BL">
    <location>
        <begin position="1"/>
        <end position="269"/>
    </location>
</feature>
<feature type="domain" description="Peptidase S8" evidence="1">
    <location>
        <begin position="5"/>
        <end position="268"/>
    </location>
</feature>
<feature type="active site" description="Charge relay system" evidence="1">
    <location>
        <position position="32"/>
    </location>
</feature>
<feature type="active site" description="Charge relay system" evidence="1">
    <location>
        <position position="62"/>
    </location>
</feature>
<feature type="active site" description="Charge relay system" evidence="1">
    <location>
        <position position="215"/>
    </location>
</feature>
<feature type="binding site">
    <location>
        <position position="2"/>
    </location>
    <ligand>
        <name>Ca(2+)</name>
        <dbReference type="ChEBI" id="CHEBI:29108"/>
        <label>1</label>
    </ligand>
</feature>
<feature type="binding site">
    <location>
        <position position="40"/>
    </location>
    <ligand>
        <name>Ca(2+)</name>
        <dbReference type="ChEBI" id="CHEBI:29108"/>
        <label>1</label>
    </ligand>
</feature>
<feature type="binding site">
    <location>
        <position position="73"/>
    </location>
    <ligand>
        <name>Ca(2+)</name>
        <dbReference type="ChEBI" id="CHEBI:29108"/>
        <label>1</label>
    </ligand>
</feature>
<feature type="binding site">
    <location>
        <position position="75"/>
    </location>
    <ligand>
        <name>Ca(2+)</name>
        <dbReference type="ChEBI" id="CHEBI:29108"/>
        <label>1</label>
    </ligand>
</feature>
<feature type="binding site">
    <location>
        <position position="77"/>
    </location>
    <ligand>
        <name>Ca(2+)</name>
        <dbReference type="ChEBI" id="CHEBI:29108"/>
        <label>1</label>
    </ligand>
</feature>
<feature type="binding site">
    <location>
        <position position="79"/>
    </location>
    <ligand>
        <name>Ca(2+)</name>
        <dbReference type="ChEBI" id="CHEBI:29108"/>
        <label>1</label>
    </ligand>
</feature>
<feature type="binding site">
    <location>
        <position position="163"/>
    </location>
    <ligand>
        <name>Ca(2+)</name>
        <dbReference type="ChEBI" id="CHEBI:29108"/>
        <label>2</label>
    </ligand>
</feature>
<feature type="binding site">
    <location>
        <position position="165"/>
    </location>
    <ligand>
        <name>Ca(2+)</name>
        <dbReference type="ChEBI" id="CHEBI:29108"/>
        <label>2</label>
    </ligand>
</feature>
<feature type="binding site">
    <location>
        <position position="168"/>
    </location>
    <ligand>
        <name>Ca(2+)</name>
        <dbReference type="ChEBI" id="CHEBI:29108"/>
        <label>2</label>
    </ligand>
</feature>
<feature type="helix" evidence="3">
    <location>
        <begin position="6"/>
        <end position="10"/>
    </location>
</feature>
<feature type="helix" evidence="3">
    <location>
        <begin position="13"/>
        <end position="18"/>
    </location>
</feature>
<feature type="strand" evidence="3">
    <location>
        <begin position="27"/>
        <end position="33"/>
    </location>
</feature>
<feature type="strand" evidence="3">
    <location>
        <begin position="43"/>
        <end position="48"/>
    </location>
</feature>
<feature type="strand" evidence="3">
    <location>
        <begin position="59"/>
        <end position="61"/>
    </location>
</feature>
<feature type="helix" evidence="3">
    <location>
        <begin position="62"/>
        <end position="71"/>
    </location>
</feature>
<feature type="strand" evidence="3">
    <location>
        <begin position="75"/>
        <end position="78"/>
    </location>
</feature>
<feature type="strand" evidence="3">
    <location>
        <begin position="86"/>
        <end position="92"/>
    </location>
</feature>
<feature type="helix" evidence="3">
    <location>
        <begin position="102"/>
        <end position="114"/>
    </location>
</feature>
<feature type="strand" evidence="3">
    <location>
        <begin position="118"/>
        <end position="122"/>
    </location>
</feature>
<feature type="strand" evidence="3">
    <location>
        <begin position="126"/>
        <end position="128"/>
    </location>
</feature>
<feature type="helix" evidence="3">
    <location>
        <begin position="131"/>
        <end position="142"/>
    </location>
</feature>
<feature type="strand" evidence="3">
    <location>
        <begin position="146"/>
        <end position="150"/>
    </location>
</feature>
<feature type="turn" evidence="3">
    <location>
        <begin position="162"/>
        <end position="164"/>
    </location>
</feature>
<feature type="strand" evidence="3">
    <location>
        <begin position="168"/>
        <end position="174"/>
    </location>
</feature>
<feature type="strand" evidence="3">
    <location>
        <begin position="178"/>
        <end position="180"/>
    </location>
</feature>
<feature type="strand" evidence="3">
    <location>
        <begin position="192"/>
        <end position="195"/>
    </location>
</feature>
<feature type="strand" evidence="3">
    <location>
        <begin position="197"/>
        <end position="203"/>
    </location>
</feature>
<feature type="turn" evidence="3">
    <location>
        <begin position="204"/>
        <end position="206"/>
    </location>
</feature>
<feature type="strand" evidence="3">
    <location>
        <begin position="207"/>
        <end position="211"/>
    </location>
</feature>
<feature type="helix" evidence="3">
    <location>
        <begin position="214"/>
        <end position="231"/>
    </location>
</feature>
<feature type="helix" evidence="3">
    <location>
        <begin position="237"/>
        <end position="246"/>
    </location>
</feature>
<feature type="helix" evidence="3">
    <location>
        <begin position="254"/>
        <end position="257"/>
    </location>
</feature>
<feature type="helix" evidence="3">
    <location>
        <begin position="264"/>
        <end position="267"/>
    </location>
</feature>
<dbReference type="EC" id="3.4.21.62"/>
<dbReference type="PDB" id="1ST3">
    <property type="method" value="X-ray"/>
    <property type="resolution" value="1.40 A"/>
    <property type="chains" value="A=2-269"/>
</dbReference>
<dbReference type="PDBsum" id="1ST3"/>
<dbReference type="SMR" id="P29599"/>
<dbReference type="BindingDB" id="P29599"/>
<dbReference type="ChEMBL" id="CHEMBL4258"/>
<dbReference type="MEROPS" id="S08.003"/>
<dbReference type="SABIO-RK" id="P29599"/>
<dbReference type="EvolutionaryTrace" id="P29599"/>
<dbReference type="GO" id="GO:0005576">
    <property type="term" value="C:extracellular region"/>
    <property type="evidence" value="ECO:0007669"/>
    <property type="project" value="UniProtKB-SubCell"/>
</dbReference>
<dbReference type="GO" id="GO:0046872">
    <property type="term" value="F:metal ion binding"/>
    <property type="evidence" value="ECO:0007669"/>
    <property type="project" value="UniProtKB-KW"/>
</dbReference>
<dbReference type="GO" id="GO:0004252">
    <property type="term" value="F:serine-type endopeptidase activity"/>
    <property type="evidence" value="ECO:0007669"/>
    <property type="project" value="UniProtKB-EC"/>
</dbReference>
<dbReference type="GO" id="GO:0006508">
    <property type="term" value="P:proteolysis"/>
    <property type="evidence" value="ECO:0007669"/>
    <property type="project" value="UniProtKB-KW"/>
</dbReference>
<dbReference type="GO" id="GO:0030435">
    <property type="term" value="P:sporulation resulting in formation of a cellular spore"/>
    <property type="evidence" value="ECO:0007669"/>
    <property type="project" value="UniProtKB-KW"/>
</dbReference>
<dbReference type="CDD" id="cd07477">
    <property type="entry name" value="Peptidases_S8_Subtilisin_subset"/>
    <property type="match status" value="1"/>
</dbReference>
<dbReference type="Gene3D" id="3.40.50.200">
    <property type="entry name" value="Peptidase S8/S53 domain"/>
    <property type="match status" value="1"/>
</dbReference>
<dbReference type="InterPro" id="IPR000209">
    <property type="entry name" value="Peptidase_S8/S53_dom"/>
</dbReference>
<dbReference type="InterPro" id="IPR036852">
    <property type="entry name" value="Peptidase_S8/S53_dom_sf"/>
</dbReference>
<dbReference type="InterPro" id="IPR023827">
    <property type="entry name" value="Peptidase_S8_Asp-AS"/>
</dbReference>
<dbReference type="InterPro" id="IPR022398">
    <property type="entry name" value="Peptidase_S8_His-AS"/>
</dbReference>
<dbReference type="InterPro" id="IPR023828">
    <property type="entry name" value="Peptidase_S8_Ser-AS"/>
</dbReference>
<dbReference type="InterPro" id="IPR050131">
    <property type="entry name" value="Peptidase_S8_subtilisin-like"/>
</dbReference>
<dbReference type="InterPro" id="IPR015500">
    <property type="entry name" value="Peptidase_S8_subtilisin-rel"/>
</dbReference>
<dbReference type="InterPro" id="IPR034202">
    <property type="entry name" value="Subtilisin_Carlsberg-like"/>
</dbReference>
<dbReference type="PANTHER" id="PTHR43806:SF11">
    <property type="entry name" value="CEREVISIN-RELATED"/>
    <property type="match status" value="1"/>
</dbReference>
<dbReference type="PANTHER" id="PTHR43806">
    <property type="entry name" value="PEPTIDASE S8"/>
    <property type="match status" value="1"/>
</dbReference>
<dbReference type="Pfam" id="PF00082">
    <property type="entry name" value="Peptidase_S8"/>
    <property type="match status" value="1"/>
</dbReference>
<dbReference type="PRINTS" id="PR00723">
    <property type="entry name" value="SUBTILISIN"/>
</dbReference>
<dbReference type="SUPFAM" id="SSF52743">
    <property type="entry name" value="Subtilisin-like"/>
    <property type="match status" value="1"/>
</dbReference>
<dbReference type="PROSITE" id="PS51892">
    <property type="entry name" value="SUBTILASE"/>
    <property type="match status" value="1"/>
</dbReference>
<dbReference type="PROSITE" id="PS00136">
    <property type="entry name" value="SUBTILASE_ASP"/>
    <property type="match status" value="1"/>
</dbReference>
<dbReference type="PROSITE" id="PS00137">
    <property type="entry name" value="SUBTILASE_HIS"/>
    <property type="match status" value="1"/>
</dbReference>
<dbReference type="PROSITE" id="PS00138">
    <property type="entry name" value="SUBTILASE_SER"/>
    <property type="match status" value="1"/>
</dbReference>
<name>SUBB_LEDLE</name>
<proteinExistence type="evidence at protein level"/>
<comment type="function">
    <text>Subtilisin is an extracellular alkaline serine protease, it catalyzes the hydrolysis of proteins and peptide amides.</text>
</comment>
<comment type="catalytic activity">
    <reaction>
        <text>Hydrolysis of proteins with broad specificity for peptide bonds, and a preference for a large uncharged residue in P1. Hydrolyzes peptide amides.</text>
        <dbReference type="EC" id="3.4.21.62"/>
    </reaction>
</comment>
<comment type="cofactor">
    <cofactor>
        <name>Ca(2+)</name>
        <dbReference type="ChEBI" id="CHEBI:29108"/>
    </cofactor>
    <text>Binds 2 calcium ions per subunit.</text>
</comment>
<comment type="subcellular location">
    <subcellularLocation>
        <location>Secreted</location>
    </subcellularLocation>
</comment>
<comment type="miscellaneous">
    <text>Secretion of subtilisin is associated with onset of sporulation, and many mutations which block sporulation at early stages affect expression levels of subtilisin. However, subtilisin is not necessary for normal sporulation.</text>
</comment>
<comment type="similarity">
    <text evidence="2">Belongs to the peptidase S8 family.</text>
</comment>
<reference key="1">
    <citation type="journal article" date="1992" name="J. Mol. Biol.">
        <title>The crystal structure of the Bacillus lentus alkaline protease, subtilisin BL, at 1.4-A resolution.</title>
        <authorList>
            <person name="Goddette D.W."/>
            <person name="Paech C."/>
            <person name="Yang S.S."/>
            <person name="Mielenz J.R."/>
            <person name="Bystroff C."/>
            <person name="Wilke M.E."/>
            <person name="Fletterick R.J."/>
        </authorList>
    </citation>
    <scope>X-RAY CRYSTALLOGRAPHY (1.4 ANGSTROMS)</scope>
</reference>
<accession>P29599</accession>
<evidence type="ECO:0000255" key="1">
    <source>
        <dbReference type="PROSITE-ProRule" id="PRU01240"/>
    </source>
</evidence>
<evidence type="ECO:0000305" key="2"/>
<evidence type="ECO:0007829" key="3">
    <source>
        <dbReference type="PDB" id="1ST3"/>
    </source>
</evidence>
<organism>
    <name type="scientific">Lederbergia lenta</name>
    <name type="common">Bacillus lentus</name>
    <dbReference type="NCBI Taxonomy" id="1467"/>
    <lineage>
        <taxon>Bacteria</taxon>
        <taxon>Bacillati</taxon>
        <taxon>Bacillota</taxon>
        <taxon>Bacilli</taxon>
        <taxon>Bacillales</taxon>
        <taxon>Bacillaceae</taxon>
        <taxon>Lederbergia</taxon>
    </lineage>
</organism>
<keyword id="KW-0002">3D-structure</keyword>
<keyword id="KW-0106">Calcium</keyword>
<keyword id="KW-0378">Hydrolase</keyword>
<keyword id="KW-0479">Metal-binding</keyword>
<keyword id="KW-0645">Protease</keyword>
<keyword id="KW-0964">Secreted</keyword>
<keyword id="KW-0720">Serine protease</keyword>
<keyword id="KW-0749">Sporulation</keyword>
<protein>
    <recommendedName>
        <fullName>Subtilisin BL</fullName>
        <ecNumber>3.4.21.62</ecNumber>
    </recommendedName>
    <alternativeName>
        <fullName>Alkaline protease</fullName>
    </alternativeName>
</protein>
<sequence length="269" mass="26824">AQSVPWGISRVQAPAAHNRGLTGSGVKVAVLDTGISTHPDLNIRGGASFVPGEPSTQDGNGHGTHVAGTIAALNNSIGVLGVAPSAELYAVKVLGADGRGAISSIAQGLEWAGNNGMHVANLSLGSPSPSATLEQAVNSATSRGVLVVAASGNSGASSISYPARYANAMAVGATDQNNNRASFSQYGAGLDIVAPGVNVQSTYPGSTYASLNGTSMATPHVAGAAALVKQKNPSWSNVQIRNHLKNTATSLGSTNLYGSGLVNAEAATR</sequence>